<protein>
    <recommendedName>
        <fullName evidence="1">Queuine tRNA-ribosyltransferase</fullName>
        <ecNumber evidence="1">2.4.2.29</ecNumber>
    </recommendedName>
    <alternativeName>
        <fullName evidence="1">Guanine insertion enzyme</fullName>
    </alternativeName>
    <alternativeName>
        <fullName evidence="1">tRNA-guanine transglycosylase</fullName>
    </alternativeName>
</protein>
<reference key="1">
    <citation type="submission" date="2006-09" db="EMBL/GenBank/DDBJ databases">
        <title>Complete sequence of chromosome 1 of Shewanella sp. ANA-3.</title>
        <authorList>
            <person name="Copeland A."/>
            <person name="Lucas S."/>
            <person name="Lapidus A."/>
            <person name="Barry K."/>
            <person name="Detter J.C."/>
            <person name="Glavina del Rio T."/>
            <person name="Hammon N."/>
            <person name="Israni S."/>
            <person name="Dalin E."/>
            <person name="Tice H."/>
            <person name="Pitluck S."/>
            <person name="Chertkov O."/>
            <person name="Brettin T."/>
            <person name="Bruce D."/>
            <person name="Han C."/>
            <person name="Tapia R."/>
            <person name="Gilna P."/>
            <person name="Schmutz J."/>
            <person name="Larimer F."/>
            <person name="Land M."/>
            <person name="Hauser L."/>
            <person name="Kyrpides N."/>
            <person name="Kim E."/>
            <person name="Newman D."/>
            <person name="Salticov C."/>
            <person name="Konstantinidis K."/>
            <person name="Klappenback J."/>
            <person name="Tiedje J."/>
            <person name="Richardson P."/>
        </authorList>
    </citation>
    <scope>NUCLEOTIDE SEQUENCE [LARGE SCALE GENOMIC DNA]</scope>
    <source>
        <strain>ANA-3</strain>
    </source>
</reference>
<feature type="chain" id="PRO_1000016850" description="Queuine tRNA-ribosyltransferase">
    <location>
        <begin position="1"/>
        <end position="374"/>
    </location>
</feature>
<feature type="region of interest" description="RNA binding" evidence="1">
    <location>
        <begin position="245"/>
        <end position="251"/>
    </location>
</feature>
<feature type="region of interest" description="RNA binding; important for wobble base 34 recognition" evidence="1">
    <location>
        <begin position="269"/>
        <end position="273"/>
    </location>
</feature>
<feature type="active site" description="Proton acceptor" evidence="1">
    <location>
        <position position="89"/>
    </location>
</feature>
<feature type="active site" description="Nucleophile" evidence="1">
    <location>
        <position position="264"/>
    </location>
</feature>
<feature type="binding site" evidence="1">
    <location>
        <begin position="89"/>
        <end position="93"/>
    </location>
    <ligand>
        <name>substrate</name>
    </ligand>
</feature>
<feature type="binding site" evidence="1">
    <location>
        <position position="143"/>
    </location>
    <ligand>
        <name>substrate</name>
    </ligand>
</feature>
<feature type="binding site" evidence="1">
    <location>
        <position position="187"/>
    </location>
    <ligand>
        <name>substrate</name>
    </ligand>
</feature>
<feature type="binding site" evidence="1">
    <location>
        <position position="214"/>
    </location>
    <ligand>
        <name>substrate</name>
    </ligand>
</feature>
<feature type="binding site" evidence="1">
    <location>
        <position position="302"/>
    </location>
    <ligand>
        <name>Zn(2+)</name>
        <dbReference type="ChEBI" id="CHEBI:29105"/>
    </ligand>
</feature>
<feature type="binding site" evidence="1">
    <location>
        <position position="304"/>
    </location>
    <ligand>
        <name>Zn(2+)</name>
        <dbReference type="ChEBI" id="CHEBI:29105"/>
    </ligand>
</feature>
<feature type="binding site" evidence="1">
    <location>
        <position position="307"/>
    </location>
    <ligand>
        <name>Zn(2+)</name>
        <dbReference type="ChEBI" id="CHEBI:29105"/>
    </ligand>
</feature>
<feature type="binding site" evidence="1">
    <location>
        <position position="333"/>
    </location>
    <ligand>
        <name>Zn(2+)</name>
        <dbReference type="ChEBI" id="CHEBI:29105"/>
    </ligand>
</feature>
<keyword id="KW-0328">Glycosyltransferase</keyword>
<keyword id="KW-0479">Metal-binding</keyword>
<keyword id="KW-0671">Queuosine biosynthesis</keyword>
<keyword id="KW-0808">Transferase</keyword>
<keyword id="KW-0819">tRNA processing</keyword>
<keyword id="KW-0862">Zinc</keyword>
<dbReference type="EC" id="2.4.2.29" evidence="1"/>
<dbReference type="EMBL" id="CP000469">
    <property type="protein sequence ID" value="ABK47669.1"/>
    <property type="molecule type" value="Genomic_DNA"/>
</dbReference>
<dbReference type="RefSeq" id="WP_011622165.1">
    <property type="nucleotide sequence ID" value="NC_008577.1"/>
</dbReference>
<dbReference type="SMR" id="A0KV50"/>
<dbReference type="STRING" id="94122.Shewana3_1435"/>
<dbReference type="GeneID" id="75188122"/>
<dbReference type="KEGG" id="shn:Shewana3_1435"/>
<dbReference type="eggNOG" id="COG0343">
    <property type="taxonomic scope" value="Bacteria"/>
</dbReference>
<dbReference type="HOGENOM" id="CLU_022060_0_1_6"/>
<dbReference type="OrthoDB" id="9805417at2"/>
<dbReference type="UniPathway" id="UPA00392"/>
<dbReference type="Proteomes" id="UP000002589">
    <property type="component" value="Chromosome"/>
</dbReference>
<dbReference type="GO" id="GO:0005829">
    <property type="term" value="C:cytosol"/>
    <property type="evidence" value="ECO:0007669"/>
    <property type="project" value="TreeGrafter"/>
</dbReference>
<dbReference type="GO" id="GO:0046872">
    <property type="term" value="F:metal ion binding"/>
    <property type="evidence" value="ECO:0007669"/>
    <property type="project" value="UniProtKB-KW"/>
</dbReference>
<dbReference type="GO" id="GO:0008479">
    <property type="term" value="F:tRNA-guanosine(34) queuine transglycosylase activity"/>
    <property type="evidence" value="ECO:0007669"/>
    <property type="project" value="UniProtKB-UniRule"/>
</dbReference>
<dbReference type="GO" id="GO:0008616">
    <property type="term" value="P:queuosine biosynthetic process"/>
    <property type="evidence" value="ECO:0007669"/>
    <property type="project" value="UniProtKB-UniRule"/>
</dbReference>
<dbReference type="GO" id="GO:0002099">
    <property type="term" value="P:tRNA wobble guanine modification"/>
    <property type="evidence" value="ECO:0007669"/>
    <property type="project" value="TreeGrafter"/>
</dbReference>
<dbReference type="GO" id="GO:0101030">
    <property type="term" value="P:tRNA-guanine transglycosylation"/>
    <property type="evidence" value="ECO:0007669"/>
    <property type="project" value="InterPro"/>
</dbReference>
<dbReference type="FunFam" id="3.20.20.105:FF:000001">
    <property type="entry name" value="Queuine tRNA-ribosyltransferase"/>
    <property type="match status" value="1"/>
</dbReference>
<dbReference type="Gene3D" id="3.20.20.105">
    <property type="entry name" value="Queuine tRNA-ribosyltransferase-like"/>
    <property type="match status" value="1"/>
</dbReference>
<dbReference type="HAMAP" id="MF_00168">
    <property type="entry name" value="Q_tRNA_Tgt"/>
    <property type="match status" value="1"/>
</dbReference>
<dbReference type="InterPro" id="IPR050076">
    <property type="entry name" value="ArchSynthase1/Queuine_TRR"/>
</dbReference>
<dbReference type="InterPro" id="IPR004803">
    <property type="entry name" value="TGT"/>
</dbReference>
<dbReference type="InterPro" id="IPR036511">
    <property type="entry name" value="TGT-like_sf"/>
</dbReference>
<dbReference type="InterPro" id="IPR002616">
    <property type="entry name" value="tRNA_ribo_trans-like"/>
</dbReference>
<dbReference type="NCBIfam" id="TIGR00430">
    <property type="entry name" value="Q_tRNA_tgt"/>
    <property type="match status" value="1"/>
</dbReference>
<dbReference type="NCBIfam" id="TIGR00449">
    <property type="entry name" value="tgt_general"/>
    <property type="match status" value="1"/>
</dbReference>
<dbReference type="PANTHER" id="PTHR46499">
    <property type="entry name" value="QUEUINE TRNA-RIBOSYLTRANSFERASE"/>
    <property type="match status" value="1"/>
</dbReference>
<dbReference type="PANTHER" id="PTHR46499:SF1">
    <property type="entry name" value="QUEUINE TRNA-RIBOSYLTRANSFERASE"/>
    <property type="match status" value="1"/>
</dbReference>
<dbReference type="Pfam" id="PF01702">
    <property type="entry name" value="TGT"/>
    <property type="match status" value="1"/>
</dbReference>
<dbReference type="SUPFAM" id="SSF51713">
    <property type="entry name" value="tRNA-guanine transglycosylase"/>
    <property type="match status" value="1"/>
</dbReference>
<accession>A0KV50</accession>
<organism>
    <name type="scientific">Shewanella sp. (strain ANA-3)</name>
    <dbReference type="NCBI Taxonomy" id="94122"/>
    <lineage>
        <taxon>Bacteria</taxon>
        <taxon>Pseudomonadati</taxon>
        <taxon>Pseudomonadota</taxon>
        <taxon>Gammaproteobacteria</taxon>
        <taxon>Alteromonadales</taxon>
        <taxon>Shewanellaceae</taxon>
        <taxon>Shewanella</taxon>
    </lineage>
</organism>
<comment type="function">
    <text evidence="1">Catalyzes the base-exchange of a guanine (G) residue with the queuine precursor 7-aminomethyl-7-deazaguanine (PreQ1) at position 34 (anticodon wobble position) in tRNAs with GU(N) anticodons (tRNA-Asp, -Asn, -His and -Tyr). Catalysis occurs through a double-displacement mechanism. The nucleophile active site attacks the C1' of nucleotide 34 to detach the guanine base from the RNA, forming a covalent enzyme-RNA intermediate. The proton acceptor active site deprotonates the incoming PreQ1, allowing a nucleophilic attack on the C1' of the ribose to form the product. After dissociation, two additional enzymatic reactions on the tRNA convert PreQ1 to queuine (Q), resulting in the hypermodified nucleoside queuosine (7-(((4,5-cis-dihydroxy-2-cyclopenten-1-yl)amino)methyl)-7-deazaguanosine).</text>
</comment>
<comment type="catalytic activity">
    <reaction evidence="1">
        <text>7-aminomethyl-7-carbaguanine + guanosine(34) in tRNA = 7-aminomethyl-7-carbaguanosine(34) in tRNA + guanine</text>
        <dbReference type="Rhea" id="RHEA:24104"/>
        <dbReference type="Rhea" id="RHEA-COMP:10341"/>
        <dbReference type="Rhea" id="RHEA-COMP:10342"/>
        <dbReference type="ChEBI" id="CHEBI:16235"/>
        <dbReference type="ChEBI" id="CHEBI:58703"/>
        <dbReference type="ChEBI" id="CHEBI:74269"/>
        <dbReference type="ChEBI" id="CHEBI:82833"/>
        <dbReference type="EC" id="2.4.2.29"/>
    </reaction>
</comment>
<comment type="cofactor">
    <cofactor evidence="1">
        <name>Zn(2+)</name>
        <dbReference type="ChEBI" id="CHEBI:29105"/>
    </cofactor>
    <text evidence="1">Binds 1 zinc ion per subunit.</text>
</comment>
<comment type="pathway">
    <text evidence="1">tRNA modification; tRNA-queuosine biosynthesis.</text>
</comment>
<comment type="subunit">
    <text evidence="1">Homodimer. Within each dimer, one monomer is responsible for RNA recognition and catalysis, while the other monomer binds to the replacement base PreQ1.</text>
</comment>
<comment type="similarity">
    <text evidence="1">Belongs to the queuine tRNA-ribosyltransferase family.</text>
</comment>
<name>TGT_SHESA</name>
<sequence>MKFELDTTDGRARRGRLIFERGTVETPAFMPVGTYGTVKGMTPEEVRATGADILLGNTFHLWLRPGEEIMRKHGDLHDFMNWQRPILTDSGGFQVFSLGDIRKITEEGVHFRSPINGEKIFLDPEKSMQIQHALGSDVVMIFDECTPYPATEDEARKSMQMSLRWAKRSRDEFDRLENPNSLFGIIQGSVYEDLRDESLKGLVEIGFDGYAVGGLAVGEPKEDMHRILEHVCPQIPADKPRYLMGVGKPEDLVEGVRRGIDMFDCVMPTRNARNGHLFTSEGVIKIRNARHRDDTSPLDPKCDCYTCKNYSRAYLYHLDRCNEILGARLNTIHNLRYYQMLMEGLRGAIETGTLDAFVKDFYTSQGREVPELVD</sequence>
<proteinExistence type="inferred from homology"/>
<gene>
    <name evidence="1" type="primary">tgt</name>
    <name type="ordered locus">Shewana3_1435</name>
</gene>
<evidence type="ECO:0000255" key="1">
    <source>
        <dbReference type="HAMAP-Rule" id="MF_00168"/>
    </source>
</evidence>